<feature type="signal peptide" evidence="3">
    <location>
        <begin position="1"/>
        <end position="18"/>
    </location>
</feature>
<feature type="chain" id="PRO_0000448064" description="Phospholipase A2" evidence="5">
    <location>
        <begin position="19"/>
        <end position="146"/>
    </location>
</feature>
<feature type="active site" evidence="2">
    <location>
        <position position="65"/>
    </location>
</feature>
<feature type="active site" evidence="2">
    <location>
        <position position="111"/>
    </location>
</feature>
<feature type="binding site" evidence="1">
    <location>
        <position position="45"/>
    </location>
    <ligand>
        <name>Ca(2+)</name>
        <dbReference type="ChEBI" id="CHEBI:29108"/>
    </ligand>
</feature>
<feature type="binding site" evidence="1">
    <location>
        <position position="47"/>
    </location>
    <ligand>
        <name>Ca(2+)</name>
        <dbReference type="ChEBI" id="CHEBI:29108"/>
    </ligand>
</feature>
<feature type="binding site" evidence="1">
    <location>
        <position position="49"/>
    </location>
    <ligand>
        <name>Ca(2+)</name>
        <dbReference type="ChEBI" id="CHEBI:29108"/>
    </ligand>
</feature>
<feature type="binding site" evidence="1">
    <location>
        <position position="66"/>
    </location>
    <ligand>
        <name>Ca(2+)</name>
        <dbReference type="ChEBI" id="CHEBI:29108"/>
    </ligand>
</feature>
<feature type="glycosylation site" description="N-linked (GlcNAc...) asparagine" evidence="3">
    <location>
        <position position="85"/>
    </location>
</feature>
<feature type="glycosylation site" description="N-linked (GlcNAc...) asparagine" evidence="3">
    <location>
        <position position="126"/>
    </location>
</feature>
<feature type="disulfide bond" evidence="1">
    <location>
        <begin position="44"/>
        <end position="137"/>
    </location>
</feature>
<feature type="disulfide bond" evidence="1">
    <location>
        <begin position="46"/>
        <end position="62"/>
    </location>
</feature>
<feature type="disulfide bond" evidence="1">
    <location>
        <begin position="61"/>
        <end position="117"/>
    </location>
</feature>
<feature type="disulfide bond" evidence="1">
    <location>
        <begin position="67"/>
        <end position="144"/>
    </location>
</feature>
<feature type="disulfide bond" evidence="1">
    <location>
        <begin position="68"/>
        <end position="110"/>
    </location>
</feature>
<feature type="disulfide bond" evidence="1">
    <location>
        <begin position="77"/>
        <end position="103"/>
    </location>
</feature>
<feature type="disulfide bond" evidence="1">
    <location>
        <begin position="95"/>
        <end position="108"/>
    </location>
</feature>
<sequence>MAFLVFAFLTLMAVETYGSLFQFRLMINYLTGKLPILSHSFYGCYCGAGGSGWPKDAIDWCCQVHDCCYGRMSASGCDPYFQPYNFSYINKNLQCVETDTSGCPRRICECDRLASICFQQHDATYNSSNIDPKRKGCGTKSPPCPN</sequence>
<proteinExistence type="evidence at protein level"/>
<comment type="function">
    <text evidence="3">PLA2 catalyzes the calcium-dependent hydrolysis of the 2-acyl groups in 3-sn-phosphoglycerides.</text>
</comment>
<comment type="catalytic activity">
    <reaction evidence="3">
        <text>a 1,2-diacyl-sn-glycero-3-phosphocholine + H2O = a 1-acyl-sn-glycero-3-phosphocholine + a fatty acid + H(+)</text>
        <dbReference type="Rhea" id="RHEA:15801"/>
        <dbReference type="ChEBI" id="CHEBI:15377"/>
        <dbReference type="ChEBI" id="CHEBI:15378"/>
        <dbReference type="ChEBI" id="CHEBI:28868"/>
        <dbReference type="ChEBI" id="CHEBI:57643"/>
        <dbReference type="ChEBI" id="CHEBI:58168"/>
        <dbReference type="EC" id="3.1.1.4"/>
    </reaction>
</comment>
<comment type="cofactor">
    <cofactor evidence="3">
        <name>Ca(2+)</name>
        <dbReference type="ChEBI" id="CHEBI:29108"/>
    </cofactor>
</comment>
<comment type="subcellular location">
    <subcellularLocation>
        <location evidence="3">Secreted</location>
    </subcellularLocation>
</comment>
<comment type="tissue specificity">
    <text evidence="3">Expressed by the skin glands (at protein level).</text>
</comment>
<comment type="PTM">
    <text evidence="3">N-glycosylated. Glycosylated with mannose chains including Man2(GlcNAc), Man2(GlcNAc)2, Man2(GlcNAc)3, Man2(GlcNAc)4 and Man2(GlcNAc)5.</text>
</comment>
<comment type="mass spectrometry"/>
<comment type="similarity">
    <text evidence="5">Belongs to the phospholipase A2 family.</text>
</comment>
<protein>
    <recommendedName>
        <fullName evidence="4">Phospholipase A2</fullName>
        <ecNumber evidence="3">3.1.1.4</ecNumber>
    </recommendedName>
    <alternativeName>
        <fullName evidence="4">Pa-PLA2</fullName>
    </alternativeName>
    <alternativeName>
        <fullName evidence="5">Phosphatidylcholine 2-acylhydrolase</fullName>
    </alternativeName>
</protein>
<organism>
    <name type="scientific">Pithecopus azureus</name>
    <name type="common">Orange-legged monkey tree frog</name>
    <name type="synonym">Phyllomedusa azurea</name>
    <dbReference type="NCBI Taxonomy" id="2034991"/>
    <lineage>
        <taxon>Eukaryota</taxon>
        <taxon>Metazoa</taxon>
        <taxon>Chordata</taxon>
        <taxon>Craniata</taxon>
        <taxon>Vertebrata</taxon>
        <taxon>Euteleostomi</taxon>
        <taxon>Amphibia</taxon>
        <taxon>Batrachia</taxon>
        <taxon>Anura</taxon>
        <taxon>Neobatrachia</taxon>
        <taxon>Hyloidea</taxon>
        <taxon>Hylidae</taxon>
        <taxon>Phyllomedusinae</taxon>
        <taxon>Pithecopus</taxon>
    </lineage>
</organism>
<accession>C0HLL2</accession>
<evidence type="ECO:0000250" key="1">
    <source>
        <dbReference type="UniProtKB" id="O42187"/>
    </source>
</evidence>
<evidence type="ECO:0000255" key="2">
    <source>
        <dbReference type="PROSITE-ProRule" id="PRU10035"/>
    </source>
</evidence>
<evidence type="ECO:0000269" key="3">
    <source>
    </source>
</evidence>
<evidence type="ECO:0000303" key="4">
    <source>
    </source>
</evidence>
<evidence type="ECO:0000305" key="5"/>
<keyword id="KW-0106">Calcium</keyword>
<keyword id="KW-0903">Direct protein sequencing</keyword>
<keyword id="KW-1015">Disulfide bond</keyword>
<keyword id="KW-0325">Glycoprotein</keyword>
<keyword id="KW-0378">Hydrolase</keyword>
<keyword id="KW-0442">Lipid degradation</keyword>
<keyword id="KW-0443">Lipid metabolism</keyword>
<keyword id="KW-0479">Metal-binding</keyword>
<keyword id="KW-0964">Secreted</keyword>
<keyword id="KW-0732">Signal</keyword>
<reference evidence="5" key="1">
    <citation type="journal article" date="2019" name="Toxicon">
        <title>Identification and characterization of phospholipases A2 from the skin secretion of Pithecopus azureus anuran.</title>
        <authorList>
            <person name="Souza B.B.P."/>
            <person name="Cardozo Fh J.L."/>
            <person name="Murad A.M."/>
            <person name="Prates M.V."/>
            <person name="Coura M.M.A."/>
            <person name="Brand G.D."/>
            <person name="Barbosa E.A."/>
            <person name="Bloch C. Jr."/>
        </authorList>
    </citation>
    <scope>NUCLEOTIDE SEQUENCE [MRNA]</scope>
    <scope>PROTEIN SEQUENCE OF 19-105 AND 113-133</scope>
    <scope>FUNCTION</scope>
    <scope>CATALYTIC ACTIVITY</scope>
    <scope>COFACTOR</scope>
    <scope>SUBCELLULAR LOCATION</scope>
    <scope>TISSUE SPECIFICITY</scope>
    <scope>GLYCOSYLATION</scope>
    <scope>IDENTIFICATION BY MASS SPECTROMETRY</scope>
    <scope>GLYCOSYLATION AT ASN-85 AND ASN-126</scope>
    <source>
        <tissue evidence="4">Skin secretion</tissue>
    </source>
</reference>
<name>PA2_PITAZ</name>
<dbReference type="EC" id="3.1.1.4" evidence="3"/>
<dbReference type="SMR" id="C0HLL2"/>
<dbReference type="iPTMnet" id="C0HLL2"/>
<dbReference type="GO" id="GO:0005576">
    <property type="term" value="C:extracellular region"/>
    <property type="evidence" value="ECO:0000314"/>
    <property type="project" value="UniProtKB"/>
</dbReference>
<dbReference type="GO" id="GO:0005509">
    <property type="term" value="F:calcium ion binding"/>
    <property type="evidence" value="ECO:0007669"/>
    <property type="project" value="InterPro"/>
</dbReference>
<dbReference type="GO" id="GO:0047498">
    <property type="term" value="F:calcium-dependent phospholipase A2 activity"/>
    <property type="evidence" value="ECO:0000314"/>
    <property type="project" value="UniProtKB"/>
</dbReference>
<dbReference type="GO" id="GO:0005543">
    <property type="term" value="F:phospholipid binding"/>
    <property type="evidence" value="ECO:0007669"/>
    <property type="project" value="TreeGrafter"/>
</dbReference>
<dbReference type="GO" id="GO:0050482">
    <property type="term" value="P:arachidonate secretion"/>
    <property type="evidence" value="ECO:0007669"/>
    <property type="project" value="InterPro"/>
</dbReference>
<dbReference type="GO" id="GO:0046475">
    <property type="term" value="P:glycerophospholipid catabolic process"/>
    <property type="evidence" value="ECO:0000314"/>
    <property type="project" value="UniProtKB"/>
</dbReference>
<dbReference type="CDD" id="cd00125">
    <property type="entry name" value="PLA2c"/>
    <property type="match status" value="1"/>
</dbReference>
<dbReference type="FunFam" id="1.20.90.10:FF:000001">
    <property type="entry name" value="Basic phospholipase A2 homolog"/>
    <property type="match status" value="1"/>
</dbReference>
<dbReference type="Gene3D" id="1.20.90.10">
    <property type="entry name" value="Phospholipase A2 domain"/>
    <property type="match status" value="1"/>
</dbReference>
<dbReference type="InterPro" id="IPR001211">
    <property type="entry name" value="PLipase_A2"/>
</dbReference>
<dbReference type="InterPro" id="IPR033112">
    <property type="entry name" value="PLipase_A2_Asp_AS"/>
</dbReference>
<dbReference type="InterPro" id="IPR016090">
    <property type="entry name" value="PLipase_A2_dom"/>
</dbReference>
<dbReference type="InterPro" id="IPR036444">
    <property type="entry name" value="PLipase_A2_dom_sf"/>
</dbReference>
<dbReference type="InterPro" id="IPR033113">
    <property type="entry name" value="PLipase_A2_His_AS"/>
</dbReference>
<dbReference type="PANTHER" id="PTHR11716:SF101">
    <property type="entry name" value="BASIC PHOSPHOLIPASE A2 PA-11-LIKE"/>
    <property type="match status" value="1"/>
</dbReference>
<dbReference type="PANTHER" id="PTHR11716">
    <property type="entry name" value="PHOSPHOLIPASE A2 FAMILY MEMBER"/>
    <property type="match status" value="1"/>
</dbReference>
<dbReference type="Pfam" id="PF00068">
    <property type="entry name" value="Phospholip_A2_1"/>
    <property type="match status" value="1"/>
</dbReference>
<dbReference type="PRINTS" id="PR00389">
    <property type="entry name" value="PHPHLIPASEA2"/>
</dbReference>
<dbReference type="SMART" id="SM00085">
    <property type="entry name" value="PA2c"/>
    <property type="match status" value="1"/>
</dbReference>
<dbReference type="SUPFAM" id="SSF48619">
    <property type="entry name" value="Phospholipase A2, PLA2"/>
    <property type="match status" value="1"/>
</dbReference>
<dbReference type="PROSITE" id="PS00119">
    <property type="entry name" value="PA2_ASP"/>
    <property type="match status" value="1"/>
</dbReference>
<dbReference type="PROSITE" id="PS00118">
    <property type="entry name" value="PA2_HIS"/>
    <property type="match status" value="1"/>
</dbReference>